<evidence type="ECO:0000255" key="1">
    <source>
        <dbReference type="HAMAP-Rule" id="MF_00711"/>
    </source>
</evidence>
<sequence length="955" mass="104827">MSQLLQQLGTDNEFIRRHNGPASSEHQHMLNTIGAETLQQLIEETVPSSIRLPQPMQLPHGLSENAMLAELKQIAQQNTLNTSYIGQGYYNTHTPNVILRNVLENPGWYTAYTPYQPEISQGRLEALLNYQQMVMDLTGLEIANASLLDEATAAAEAMTLCKRGGKSKSNLFFVADDVHPQTLAVIKTRAKFIGFDVVVDHESNLDSHDVFGALLQYPGTTGEVKDLTDLIAQAHTKKTLVIVATDLLASVLLKPVGEMGADIAIGSAQRFGVPMGYGGPHAAFMATREKLKRSMPGRVIGVSIDSKGNQALRMAMQTREQHIRREKATSNICTAQALLANMASFYAVYHGPEGLKTIARRVHHFTAIVAKALQTAGFELEHQHFFDTLTVKTEQQTDILYTKALASSINLRKFDTKLGISFDETTTVSDLVTLLAVFGIDNAECETLSAEVGKDEFAAIPKHCQRTSSFLTHPVFNTYHSETQMLRYLKKLENKDFSLTHGMIPLGSCTMKLNAVAEMLPVTWPEFGGIHPFAPLNQAAGYTTLATSLKSMLCEITGYDEFSLQPNSGASGEYAGLIAIQRYHESRGDAHRNVCLIPSSAHGTNPATASMVSMKVVVVKCDENGNIDMIDLAEKIEKHQENLSSIMITYPSTHGVYEEQVREVCDMVHAAGGQVYLDGANMNAQVGLTSPGFIGSDVSHLNLHKTFCIPHGGGGPGMGPIGVKSHLAPFLPGHTENGVQGMDYAVSAADLGSASILPISWAYIAMMGEMGLTEATKVAILNANYVMERLRPHYPVLYRGTNGRIAHECIIDIRPLKETTGISEEDIAKRLMDFGFHAPTMSFPVAGTLMVEPTESEDLAELDRFCDAMIAIREEMNKVEQGEWPLDNNPLVNAPHTQVDLMSDSWEHPYTREVACFPSSQSKDSKYWPTVNRVDNVYGDRNLICSCPSIENYEE</sequence>
<keyword id="KW-0560">Oxidoreductase</keyword>
<keyword id="KW-0663">Pyridoxal phosphate</keyword>
<keyword id="KW-1185">Reference proteome</keyword>
<organism>
    <name type="scientific">Aliivibrio fischeri (strain ATCC 700601 / ES114)</name>
    <name type="common">Vibrio fischeri</name>
    <dbReference type="NCBI Taxonomy" id="312309"/>
    <lineage>
        <taxon>Bacteria</taxon>
        <taxon>Pseudomonadati</taxon>
        <taxon>Pseudomonadota</taxon>
        <taxon>Gammaproteobacteria</taxon>
        <taxon>Vibrionales</taxon>
        <taxon>Vibrionaceae</taxon>
        <taxon>Aliivibrio</taxon>
    </lineage>
</organism>
<proteinExistence type="inferred from homology"/>
<name>GCSP_ALIF1</name>
<gene>
    <name evidence="1" type="primary">gcvP</name>
    <name type="ordered locus">VF_A0703</name>
</gene>
<protein>
    <recommendedName>
        <fullName evidence="1">Glycine dehydrogenase (decarboxylating)</fullName>
        <ecNumber evidence="1">1.4.4.2</ecNumber>
    </recommendedName>
    <alternativeName>
        <fullName evidence="1">Glycine cleavage system P-protein</fullName>
    </alternativeName>
    <alternativeName>
        <fullName evidence="1">Glycine decarboxylase</fullName>
    </alternativeName>
    <alternativeName>
        <fullName evidence="1">Glycine dehydrogenase (aminomethyl-transferring)</fullName>
    </alternativeName>
</protein>
<dbReference type="EC" id="1.4.4.2" evidence="1"/>
<dbReference type="EMBL" id="CP000021">
    <property type="protein sequence ID" value="AAW87773.1"/>
    <property type="molecule type" value="Genomic_DNA"/>
</dbReference>
<dbReference type="RefSeq" id="WP_011263534.1">
    <property type="nucleotide sequence ID" value="NC_006841.2"/>
</dbReference>
<dbReference type="RefSeq" id="YP_206661.1">
    <property type="nucleotide sequence ID" value="NC_006841.2"/>
</dbReference>
<dbReference type="SMR" id="Q5DZM3"/>
<dbReference type="STRING" id="312309.VF_A0703"/>
<dbReference type="EnsemblBacteria" id="AAW87773">
    <property type="protein sequence ID" value="AAW87773"/>
    <property type="gene ID" value="VF_A0703"/>
</dbReference>
<dbReference type="GeneID" id="54166022"/>
<dbReference type="KEGG" id="vfi:VF_A0703"/>
<dbReference type="PATRIC" id="fig|312309.11.peg.3305"/>
<dbReference type="eggNOG" id="COG0403">
    <property type="taxonomic scope" value="Bacteria"/>
</dbReference>
<dbReference type="eggNOG" id="COG1003">
    <property type="taxonomic scope" value="Bacteria"/>
</dbReference>
<dbReference type="HOGENOM" id="CLU_004620_2_1_6"/>
<dbReference type="OrthoDB" id="9801272at2"/>
<dbReference type="Proteomes" id="UP000000537">
    <property type="component" value="Chromosome II"/>
</dbReference>
<dbReference type="GO" id="GO:0005829">
    <property type="term" value="C:cytosol"/>
    <property type="evidence" value="ECO:0007669"/>
    <property type="project" value="TreeGrafter"/>
</dbReference>
<dbReference type="GO" id="GO:0005960">
    <property type="term" value="C:glycine cleavage complex"/>
    <property type="evidence" value="ECO:0007669"/>
    <property type="project" value="TreeGrafter"/>
</dbReference>
<dbReference type="GO" id="GO:0016594">
    <property type="term" value="F:glycine binding"/>
    <property type="evidence" value="ECO:0007669"/>
    <property type="project" value="TreeGrafter"/>
</dbReference>
<dbReference type="GO" id="GO:0004375">
    <property type="term" value="F:glycine dehydrogenase (decarboxylating) activity"/>
    <property type="evidence" value="ECO:0007669"/>
    <property type="project" value="UniProtKB-EC"/>
</dbReference>
<dbReference type="GO" id="GO:0030170">
    <property type="term" value="F:pyridoxal phosphate binding"/>
    <property type="evidence" value="ECO:0007669"/>
    <property type="project" value="TreeGrafter"/>
</dbReference>
<dbReference type="GO" id="GO:0019464">
    <property type="term" value="P:glycine decarboxylation via glycine cleavage system"/>
    <property type="evidence" value="ECO:0007669"/>
    <property type="project" value="UniProtKB-UniRule"/>
</dbReference>
<dbReference type="CDD" id="cd00613">
    <property type="entry name" value="GDC-P"/>
    <property type="match status" value="2"/>
</dbReference>
<dbReference type="FunFam" id="3.40.640.10:FF:000005">
    <property type="entry name" value="Glycine dehydrogenase (decarboxylating), mitochondrial"/>
    <property type="match status" value="1"/>
</dbReference>
<dbReference type="FunFam" id="3.90.1150.10:FF:000007">
    <property type="entry name" value="Glycine dehydrogenase (decarboxylating), mitochondrial"/>
    <property type="match status" value="1"/>
</dbReference>
<dbReference type="FunFam" id="3.40.640.10:FF:000007">
    <property type="entry name" value="glycine dehydrogenase (Decarboxylating), mitochondrial"/>
    <property type="match status" value="1"/>
</dbReference>
<dbReference type="Gene3D" id="3.90.1150.10">
    <property type="entry name" value="Aspartate Aminotransferase, domain 1"/>
    <property type="match status" value="2"/>
</dbReference>
<dbReference type="Gene3D" id="3.40.640.10">
    <property type="entry name" value="Type I PLP-dependent aspartate aminotransferase-like (Major domain)"/>
    <property type="match status" value="2"/>
</dbReference>
<dbReference type="HAMAP" id="MF_00711">
    <property type="entry name" value="GcvP"/>
    <property type="match status" value="1"/>
</dbReference>
<dbReference type="InterPro" id="IPR003437">
    <property type="entry name" value="GcvP"/>
</dbReference>
<dbReference type="InterPro" id="IPR049316">
    <property type="entry name" value="GDC-P_C"/>
</dbReference>
<dbReference type="InterPro" id="IPR049315">
    <property type="entry name" value="GDC-P_N"/>
</dbReference>
<dbReference type="InterPro" id="IPR020581">
    <property type="entry name" value="GDC_P"/>
</dbReference>
<dbReference type="InterPro" id="IPR015424">
    <property type="entry name" value="PyrdxlP-dep_Trfase"/>
</dbReference>
<dbReference type="InterPro" id="IPR015421">
    <property type="entry name" value="PyrdxlP-dep_Trfase_major"/>
</dbReference>
<dbReference type="InterPro" id="IPR015422">
    <property type="entry name" value="PyrdxlP-dep_Trfase_small"/>
</dbReference>
<dbReference type="NCBIfam" id="TIGR00461">
    <property type="entry name" value="gcvP"/>
    <property type="match status" value="1"/>
</dbReference>
<dbReference type="PANTHER" id="PTHR11773:SF13">
    <property type="entry name" value="GLYCINE DEHYDROGENASE (DECARBOXYLATING)"/>
    <property type="match status" value="1"/>
</dbReference>
<dbReference type="PANTHER" id="PTHR11773">
    <property type="entry name" value="GLYCINE DEHYDROGENASE, DECARBOXYLATING"/>
    <property type="match status" value="1"/>
</dbReference>
<dbReference type="Pfam" id="PF21478">
    <property type="entry name" value="GcvP2_C"/>
    <property type="match status" value="1"/>
</dbReference>
<dbReference type="Pfam" id="PF02347">
    <property type="entry name" value="GDC-P"/>
    <property type="match status" value="2"/>
</dbReference>
<dbReference type="SUPFAM" id="SSF53383">
    <property type="entry name" value="PLP-dependent transferases"/>
    <property type="match status" value="2"/>
</dbReference>
<reference key="1">
    <citation type="journal article" date="2005" name="Proc. Natl. Acad. Sci. U.S.A.">
        <title>Complete genome sequence of Vibrio fischeri: a symbiotic bacterium with pathogenic congeners.</title>
        <authorList>
            <person name="Ruby E.G."/>
            <person name="Urbanowski M."/>
            <person name="Campbell J."/>
            <person name="Dunn A."/>
            <person name="Faini M."/>
            <person name="Gunsalus R."/>
            <person name="Lostroh P."/>
            <person name="Lupp C."/>
            <person name="McCann J."/>
            <person name="Millikan D."/>
            <person name="Schaefer A."/>
            <person name="Stabb E."/>
            <person name="Stevens A."/>
            <person name="Visick K."/>
            <person name="Whistler C."/>
            <person name="Greenberg E.P."/>
        </authorList>
    </citation>
    <scope>NUCLEOTIDE SEQUENCE [LARGE SCALE GENOMIC DNA]</scope>
    <source>
        <strain>ATCC 700601 / ES114</strain>
    </source>
</reference>
<accession>Q5DZM3</accession>
<feature type="chain" id="PRO_1000045624" description="Glycine dehydrogenase (decarboxylating)">
    <location>
        <begin position="1"/>
        <end position="955"/>
    </location>
</feature>
<feature type="modified residue" description="N6-(pyridoxal phosphate)lysine" evidence="1">
    <location>
        <position position="705"/>
    </location>
</feature>
<comment type="function">
    <text evidence="1">The glycine cleavage system catalyzes the degradation of glycine. The P protein binds the alpha-amino group of glycine through its pyridoxal phosphate cofactor; CO(2) is released and the remaining methylamine moiety is then transferred to the lipoamide cofactor of the H protein.</text>
</comment>
<comment type="catalytic activity">
    <reaction evidence="1">
        <text>N(6)-[(R)-lipoyl]-L-lysyl-[glycine-cleavage complex H protein] + glycine + H(+) = N(6)-[(R)-S(8)-aminomethyldihydrolipoyl]-L-lysyl-[glycine-cleavage complex H protein] + CO2</text>
        <dbReference type="Rhea" id="RHEA:24304"/>
        <dbReference type="Rhea" id="RHEA-COMP:10494"/>
        <dbReference type="Rhea" id="RHEA-COMP:10495"/>
        <dbReference type="ChEBI" id="CHEBI:15378"/>
        <dbReference type="ChEBI" id="CHEBI:16526"/>
        <dbReference type="ChEBI" id="CHEBI:57305"/>
        <dbReference type="ChEBI" id="CHEBI:83099"/>
        <dbReference type="ChEBI" id="CHEBI:83143"/>
        <dbReference type="EC" id="1.4.4.2"/>
    </reaction>
</comment>
<comment type="cofactor">
    <cofactor evidence="1">
        <name>pyridoxal 5'-phosphate</name>
        <dbReference type="ChEBI" id="CHEBI:597326"/>
    </cofactor>
</comment>
<comment type="subunit">
    <text evidence="1">The glycine cleavage system is composed of four proteins: P, T, L and H.</text>
</comment>
<comment type="similarity">
    <text evidence="1">Belongs to the GcvP family.</text>
</comment>